<feature type="signal peptide" evidence="1">
    <location>
        <begin position="1"/>
        <end position="19"/>
    </location>
</feature>
<feature type="chain" id="PRO_0000007998" description="Endo-1,4-beta-xylanase A">
    <location>
        <begin position="20"/>
        <end position="210"/>
    </location>
</feature>
<feature type="domain" description="GH11" evidence="2">
    <location>
        <begin position="20"/>
        <end position="210"/>
    </location>
</feature>
<feature type="active site" description="Nucleophile" evidence="3">
    <location>
        <position position="104"/>
    </location>
</feature>
<feature type="active site" description="Proton donor" evidence="4">
    <location>
        <position position="197"/>
    </location>
</feature>
<name>XYNA_GEOSE</name>
<evidence type="ECO:0000255" key="1"/>
<evidence type="ECO:0000255" key="2">
    <source>
        <dbReference type="PROSITE-ProRule" id="PRU01097"/>
    </source>
</evidence>
<evidence type="ECO:0000255" key="3">
    <source>
        <dbReference type="PROSITE-ProRule" id="PRU10062"/>
    </source>
</evidence>
<evidence type="ECO:0000255" key="4">
    <source>
        <dbReference type="PROSITE-ProRule" id="PRU10063"/>
    </source>
</evidence>
<evidence type="ECO:0000305" key="5"/>
<accession>P45705</accession>
<protein>
    <recommendedName>
        <fullName>Endo-1,4-beta-xylanase A</fullName>
        <shortName>Xylanase A</shortName>
        <ecNumber>3.2.1.8</ecNumber>
    </recommendedName>
    <alternativeName>
        <fullName>1,4-beta-D-xylan xylanohydrolase A</fullName>
    </alternativeName>
</protein>
<gene>
    <name type="primary">xynA</name>
</gene>
<comment type="catalytic activity">
    <reaction>
        <text>Endohydrolysis of (1-&gt;4)-beta-D-xylosidic linkages in xylans.</text>
        <dbReference type="EC" id="3.2.1.8"/>
    </reaction>
</comment>
<comment type="pathway">
    <text>Glycan degradation; xylan degradation.</text>
</comment>
<comment type="similarity">
    <text evidence="5">Belongs to the glycosyl hydrolase 11 (cellulase G) family.</text>
</comment>
<proteinExistence type="inferred from homology"/>
<dbReference type="EC" id="3.2.1.8"/>
<dbReference type="EMBL" id="U15985">
    <property type="protein sequence ID" value="AAB72117.1"/>
    <property type="molecule type" value="Genomic_DNA"/>
</dbReference>
<dbReference type="SMR" id="P45705"/>
<dbReference type="CAZy" id="GH11">
    <property type="family name" value="Glycoside Hydrolase Family 11"/>
</dbReference>
<dbReference type="UniPathway" id="UPA00114"/>
<dbReference type="GO" id="GO:0031176">
    <property type="term" value="F:endo-1,4-beta-xylanase activity"/>
    <property type="evidence" value="ECO:0007669"/>
    <property type="project" value="UniProtKB-EC"/>
</dbReference>
<dbReference type="GO" id="GO:0045493">
    <property type="term" value="P:xylan catabolic process"/>
    <property type="evidence" value="ECO:0007669"/>
    <property type="project" value="UniProtKB-UniPathway"/>
</dbReference>
<dbReference type="FunFam" id="2.60.120.180:FF:000001">
    <property type="entry name" value="Endo-1,4-beta-xylanase"/>
    <property type="match status" value="1"/>
</dbReference>
<dbReference type="Gene3D" id="2.60.120.180">
    <property type="match status" value="1"/>
</dbReference>
<dbReference type="InterPro" id="IPR013320">
    <property type="entry name" value="ConA-like_dom_sf"/>
</dbReference>
<dbReference type="InterPro" id="IPR013319">
    <property type="entry name" value="GH11/12"/>
</dbReference>
<dbReference type="InterPro" id="IPR018208">
    <property type="entry name" value="GH11_AS_1"/>
</dbReference>
<dbReference type="InterPro" id="IPR033119">
    <property type="entry name" value="GH11_AS_2"/>
</dbReference>
<dbReference type="InterPro" id="IPR033123">
    <property type="entry name" value="GH11_dom"/>
</dbReference>
<dbReference type="InterPro" id="IPR001137">
    <property type="entry name" value="Glyco_hydro_11"/>
</dbReference>
<dbReference type="PANTHER" id="PTHR46828">
    <property type="entry name" value="ENDO-1,4-BETA-XYLANASE A-RELATED"/>
    <property type="match status" value="1"/>
</dbReference>
<dbReference type="PANTHER" id="PTHR46828:SF2">
    <property type="entry name" value="ENDO-1,4-BETA-XYLANASE A-RELATED"/>
    <property type="match status" value="1"/>
</dbReference>
<dbReference type="Pfam" id="PF00457">
    <property type="entry name" value="Glyco_hydro_11"/>
    <property type="match status" value="1"/>
</dbReference>
<dbReference type="PRINTS" id="PR00911">
    <property type="entry name" value="GLHYDRLASE11"/>
</dbReference>
<dbReference type="SUPFAM" id="SSF49899">
    <property type="entry name" value="Concanavalin A-like lectins/glucanases"/>
    <property type="match status" value="1"/>
</dbReference>
<dbReference type="PROSITE" id="PS00776">
    <property type="entry name" value="GH11_1"/>
    <property type="match status" value="1"/>
</dbReference>
<dbReference type="PROSITE" id="PS00777">
    <property type="entry name" value="GH11_2"/>
    <property type="match status" value="1"/>
</dbReference>
<dbReference type="PROSITE" id="PS51761">
    <property type="entry name" value="GH11_3"/>
    <property type="match status" value="1"/>
</dbReference>
<organism>
    <name type="scientific">Geobacillus stearothermophilus</name>
    <name type="common">Bacillus stearothermophilus</name>
    <dbReference type="NCBI Taxonomy" id="1422"/>
    <lineage>
        <taxon>Bacteria</taxon>
        <taxon>Bacillati</taxon>
        <taxon>Bacillota</taxon>
        <taxon>Bacilli</taxon>
        <taxon>Bacillales</taxon>
        <taxon>Anoxybacillaceae</taxon>
        <taxon>Geobacillus</taxon>
    </lineage>
</organism>
<reference key="1">
    <citation type="journal article" date="1995" name="J. Microbiol. Biotechnol.">
        <title>Nucleotide sequence analysis of an endo-xylanase gene (xynA) from Bacillus stearothermophilus.</title>
        <authorList>
            <person name="Cho S."/>
            <person name="Choi Y."/>
        </authorList>
    </citation>
    <scope>NUCLEOTIDE SEQUENCE [GENOMIC DNA]</scope>
    <source>
        <strain>No. 236</strain>
    </source>
</reference>
<reference key="2">
    <citation type="submission" date="1997-11" db="EMBL/GenBank/DDBJ databases">
        <authorList>
            <person name="Cho S."/>
            <person name="Choi Y."/>
        </authorList>
    </citation>
    <scope>SEQUENCE REVISION</scope>
</reference>
<sequence length="210" mass="23221">MKLKKKMLTLLLTASMSFGLFGATSSAATDYWQYWTDGGGMVNAVNGPGGNYSVTWQNTGNFVVGKGWTVGSPNRVINYNAGIWEPSGNGYLTLYGWTRNALIEYYVVDSWGTYRPTGNYKGTVNSDGGTYDIYTTMRYNAPSIDGTQTFQQFWSVRQSKRPTGSNVSITFSNHVNAWRSKGMNLGSSWAYQVLATEGYQSSGRSNVTVW</sequence>
<keyword id="KW-0119">Carbohydrate metabolism</keyword>
<keyword id="KW-0326">Glycosidase</keyword>
<keyword id="KW-0378">Hydrolase</keyword>
<keyword id="KW-0624">Polysaccharide degradation</keyword>
<keyword id="KW-0732">Signal</keyword>
<keyword id="KW-0858">Xylan degradation</keyword>